<evidence type="ECO:0000255" key="1">
    <source>
        <dbReference type="HAMAP-Rule" id="MF_03007"/>
    </source>
</evidence>
<evidence type="ECO:0000255" key="2">
    <source>
        <dbReference type="PROSITE-ProRule" id="PRU01182"/>
    </source>
</evidence>
<evidence type="ECO:0000256" key="3">
    <source>
        <dbReference type="SAM" id="MobiDB-lite"/>
    </source>
</evidence>
<proteinExistence type="inferred from homology"/>
<gene>
    <name type="ORF">UMAG_00199</name>
</gene>
<comment type="function">
    <text evidence="1">Component of the eukaryotic translation initiation factor 3 (eIF-3) complex, which is involved in protein synthesis of a specialized repertoire of mRNAs and, together with other initiation factors, stimulates binding of mRNA and methionyl-tRNAi to the 40S ribosome. The eIF-3 complex specifically targets and initiates translation of a subset of mRNAs involved in cell proliferation.</text>
</comment>
<comment type="subunit">
    <text evidence="1">Component of the eukaryotic translation initiation factor 3 (eIF-3) complex.</text>
</comment>
<comment type="subcellular location">
    <subcellularLocation>
        <location evidence="1">Cytoplasm</location>
    </subcellularLocation>
</comment>
<comment type="similarity">
    <text evidence="1">Belongs to the eIF-3 subunit H family.</text>
</comment>
<sequence length="403" mass="42120">MSAAARIAPQSAAVAAPAPATTAASAIAKAPSADVQSELDRAALEALELDSDVITSVRLDGLALTKIVKHCRDAHPASASGALLGMDLGGTLEISNVFALPNPGRSNSERDEEEDRSSRNATRYTSDMVRLLRDVNADANPVGLYQGCFLGAFLNSSVIDGLAAITGLVERDGAGSRGKGVLIVHDLAQSAQGNTSVKAYRLSPSFVDAHKKGKFHTQSLIDHKLTFSNILIEIPVSLRNTALLDAFLSSISTPSAPGPSIVQPSTSDLLRNPPSAALAPSYTSLNLALEPVLASSLESTLEIMDEHAAEAGNVGFQARQLAREKAKADAYLARKKAENAAREAQGLAPLPIEDVNRLFKIPAEPSRLEATLLLGQIDSSARRLAETAALGVIQLNAAKTGAV</sequence>
<accession>Q4PI64</accession>
<accession>A0A0D1E782</accession>
<name>EIF3H_MYCMD</name>
<feature type="chain" id="PRO_0000365212" description="Eukaryotic translation initiation factor 3 subunit H">
    <location>
        <begin position="1"/>
        <end position="403"/>
    </location>
</feature>
<feature type="domain" description="MPN" evidence="2">
    <location>
        <begin position="57"/>
        <end position="206"/>
    </location>
</feature>
<feature type="region of interest" description="Disordered" evidence="3">
    <location>
        <begin position="99"/>
        <end position="122"/>
    </location>
</feature>
<organism>
    <name type="scientific">Mycosarcoma maydis</name>
    <name type="common">Corn smut fungus</name>
    <name type="synonym">Ustilago maydis</name>
    <dbReference type="NCBI Taxonomy" id="5270"/>
    <lineage>
        <taxon>Eukaryota</taxon>
        <taxon>Fungi</taxon>
        <taxon>Dikarya</taxon>
        <taxon>Basidiomycota</taxon>
        <taxon>Ustilaginomycotina</taxon>
        <taxon>Ustilaginomycetes</taxon>
        <taxon>Ustilaginales</taxon>
        <taxon>Ustilaginaceae</taxon>
        <taxon>Mycosarcoma</taxon>
    </lineage>
</organism>
<reference key="1">
    <citation type="journal article" date="2006" name="Nature">
        <title>Insights from the genome of the biotrophic fungal plant pathogen Ustilago maydis.</title>
        <authorList>
            <person name="Kaemper J."/>
            <person name="Kahmann R."/>
            <person name="Boelker M."/>
            <person name="Ma L.-J."/>
            <person name="Brefort T."/>
            <person name="Saville B.J."/>
            <person name="Banuett F."/>
            <person name="Kronstad J.W."/>
            <person name="Gold S.E."/>
            <person name="Mueller O."/>
            <person name="Perlin M.H."/>
            <person name="Woesten H.A.B."/>
            <person name="de Vries R."/>
            <person name="Ruiz-Herrera J."/>
            <person name="Reynaga-Pena C.G."/>
            <person name="Snetselaar K."/>
            <person name="McCann M."/>
            <person name="Perez-Martin J."/>
            <person name="Feldbruegge M."/>
            <person name="Basse C.W."/>
            <person name="Steinberg G."/>
            <person name="Ibeas J.I."/>
            <person name="Holloman W."/>
            <person name="Guzman P."/>
            <person name="Farman M.L."/>
            <person name="Stajich J.E."/>
            <person name="Sentandreu R."/>
            <person name="Gonzalez-Prieto J.M."/>
            <person name="Kennell J.C."/>
            <person name="Molina L."/>
            <person name="Schirawski J."/>
            <person name="Mendoza-Mendoza A."/>
            <person name="Greilinger D."/>
            <person name="Muench K."/>
            <person name="Roessel N."/>
            <person name="Scherer M."/>
            <person name="Vranes M."/>
            <person name="Ladendorf O."/>
            <person name="Vincon V."/>
            <person name="Fuchs U."/>
            <person name="Sandrock B."/>
            <person name="Meng S."/>
            <person name="Ho E.C.H."/>
            <person name="Cahill M.J."/>
            <person name="Boyce K.J."/>
            <person name="Klose J."/>
            <person name="Klosterman S.J."/>
            <person name="Deelstra H.J."/>
            <person name="Ortiz-Castellanos L."/>
            <person name="Li W."/>
            <person name="Sanchez-Alonso P."/>
            <person name="Schreier P.H."/>
            <person name="Haeuser-Hahn I."/>
            <person name="Vaupel M."/>
            <person name="Koopmann E."/>
            <person name="Friedrich G."/>
            <person name="Voss H."/>
            <person name="Schlueter T."/>
            <person name="Margolis J."/>
            <person name="Platt D."/>
            <person name="Swimmer C."/>
            <person name="Gnirke A."/>
            <person name="Chen F."/>
            <person name="Vysotskaia V."/>
            <person name="Mannhaupt G."/>
            <person name="Gueldener U."/>
            <person name="Muensterkoetter M."/>
            <person name="Haase D."/>
            <person name="Oesterheld M."/>
            <person name="Mewes H.-W."/>
            <person name="Mauceli E.W."/>
            <person name="DeCaprio D."/>
            <person name="Wade C.M."/>
            <person name="Butler J."/>
            <person name="Young S.K."/>
            <person name="Jaffe D.B."/>
            <person name="Calvo S.E."/>
            <person name="Nusbaum C."/>
            <person name="Galagan J.E."/>
            <person name="Birren B.W."/>
        </authorList>
    </citation>
    <scope>NUCLEOTIDE SEQUENCE [LARGE SCALE GENOMIC DNA]</scope>
    <source>
        <strain>DSM 14603 / FGSC 9021 / UM521</strain>
    </source>
</reference>
<reference key="2">
    <citation type="submission" date="2014-09" db="EMBL/GenBank/DDBJ databases">
        <authorList>
            <person name="Gueldener U."/>
            <person name="Muensterkoetter M."/>
            <person name="Walter M.C."/>
            <person name="Mannhaupt G."/>
            <person name="Kahmann R."/>
        </authorList>
    </citation>
    <scope>GENOME REANNOTATION</scope>
    <source>
        <strain>DSM 14603 / FGSC 9021 / UM521</strain>
    </source>
</reference>
<dbReference type="EMBL" id="CM003140">
    <property type="protein sequence ID" value="KIS71764.1"/>
    <property type="molecule type" value="Genomic_DNA"/>
</dbReference>
<dbReference type="RefSeq" id="XP_011386137.1">
    <property type="nucleotide sequence ID" value="XM_011387835.1"/>
</dbReference>
<dbReference type="SMR" id="Q4PI64"/>
<dbReference type="FunCoup" id="Q4PI64">
    <property type="interactions" value="732"/>
</dbReference>
<dbReference type="STRING" id="237631.Q4PI64"/>
<dbReference type="EnsemblFungi" id="KIS71764">
    <property type="protein sequence ID" value="KIS71764"/>
    <property type="gene ID" value="UMAG_00199"/>
</dbReference>
<dbReference type="GeneID" id="23561570"/>
<dbReference type="KEGG" id="uma:UMAG_00199"/>
<dbReference type="VEuPathDB" id="FungiDB:UMAG_00199"/>
<dbReference type="eggNOG" id="KOG1560">
    <property type="taxonomic scope" value="Eukaryota"/>
</dbReference>
<dbReference type="HOGENOM" id="CLU_044094_1_1_1"/>
<dbReference type="InParanoid" id="Q4PI64"/>
<dbReference type="OMA" id="WYQSTYF"/>
<dbReference type="OrthoDB" id="10265695at2759"/>
<dbReference type="Proteomes" id="UP000000561">
    <property type="component" value="Chromosome 1"/>
</dbReference>
<dbReference type="GO" id="GO:0016282">
    <property type="term" value="C:eukaryotic 43S preinitiation complex"/>
    <property type="evidence" value="ECO:0000318"/>
    <property type="project" value="GO_Central"/>
</dbReference>
<dbReference type="GO" id="GO:0033290">
    <property type="term" value="C:eukaryotic 48S preinitiation complex"/>
    <property type="evidence" value="ECO:0007669"/>
    <property type="project" value="UniProtKB-UniRule"/>
</dbReference>
<dbReference type="GO" id="GO:0005852">
    <property type="term" value="C:eukaryotic translation initiation factor 3 complex"/>
    <property type="evidence" value="ECO:0000318"/>
    <property type="project" value="GO_Central"/>
</dbReference>
<dbReference type="GO" id="GO:0008237">
    <property type="term" value="F:metallopeptidase activity"/>
    <property type="evidence" value="ECO:0000318"/>
    <property type="project" value="GO_Central"/>
</dbReference>
<dbReference type="GO" id="GO:0003743">
    <property type="term" value="F:translation initiation factor activity"/>
    <property type="evidence" value="ECO:0007669"/>
    <property type="project" value="UniProtKB-UniRule"/>
</dbReference>
<dbReference type="GO" id="GO:0001732">
    <property type="term" value="P:formation of cytoplasmic translation initiation complex"/>
    <property type="evidence" value="ECO:0007669"/>
    <property type="project" value="UniProtKB-UniRule"/>
</dbReference>
<dbReference type="GO" id="GO:0006413">
    <property type="term" value="P:translational initiation"/>
    <property type="evidence" value="ECO:0000318"/>
    <property type="project" value="GO_Central"/>
</dbReference>
<dbReference type="CDD" id="cd08065">
    <property type="entry name" value="MPN_eIF3h"/>
    <property type="match status" value="1"/>
</dbReference>
<dbReference type="FunFam" id="3.40.140.10:FF:000185">
    <property type="entry name" value="Eukaryotic translation initiation factor 3 subunit H"/>
    <property type="match status" value="1"/>
</dbReference>
<dbReference type="Gene3D" id="3.40.140.10">
    <property type="entry name" value="Cytidine Deaminase, domain 2"/>
    <property type="match status" value="1"/>
</dbReference>
<dbReference type="HAMAP" id="MF_03007">
    <property type="entry name" value="eIF3h"/>
    <property type="match status" value="1"/>
</dbReference>
<dbReference type="InterPro" id="IPR027524">
    <property type="entry name" value="eIF3h"/>
</dbReference>
<dbReference type="InterPro" id="IPR045810">
    <property type="entry name" value="eIF3h_C"/>
</dbReference>
<dbReference type="InterPro" id="IPR000555">
    <property type="entry name" value="JAMM/MPN+_dom"/>
</dbReference>
<dbReference type="InterPro" id="IPR050242">
    <property type="entry name" value="JAMM_MPN+_peptidase_M67A"/>
</dbReference>
<dbReference type="InterPro" id="IPR037518">
    <property type="entry name" value="MPN"/>
</dbReference>
<dbReference type="PANTHER" id="PTHR10410">
    <property type="entry name" value="EUKARYOTIC TRANSLATION INITIATION FACTOR 3 -RELATED"/>
    <property type="match status" value="1"/>
</dbReference>
<dbReference type="Pfam" id="PF19445">
    <property type="entry name" value="eIF3h_C"/>
    <property type="match status" value="2"/>
</dbReference>
<dbReference type="Pfam" id="PF01398">
    <property type="entry name" value="JAB"/>
    <property type="match status" value="1"/>
</dbReference>
<dbReference type="SMART" id="SM00232">
    <property type="entry name" value="JAB_MPN"/>
    <property type="match status" value="1"/>
</dbReference>
<dbReference type="PROSITE" id="PS50249">
    <property type="entry name" value="MPN"/>
    <property type="match status" value="1"/>
</dbReference>
<protein>
    <recommendedName>
        <fullName evidence="1">Eukaryotic translation initiation factor 3 subunit H</fullName>
        <shortName evidence="1">eIF3h</shortName>
    </recommendedName>
</protein>
<keyword id="KW-0963">Cytoplasm</keyword>
<keyword id="KW-0396">Initiation factor</keyword>
<keyword id="KW-0648">Protein biosynthesis</keyword>
<keyword id="KW-1185">Reference proteome</keyword>